<keyword id="KW-0479">Metal-binding</keyword>
<keyword id="KW-0665">Pyrimidine biosynthesis</keyword>
<keyword id="KW-0862">Zinc</keyword>
<evidence type="ECO:0000255" key="1">
    <source>
        <dbReference type="HAMAP-Rule" id="MF_00002"/>
    </source>
</evidence>
<name>PYRI_KLEP7</name>
<sequence>MTHDNKLQVEAIKRGTVIDHIPAQVGFKLLTLFKLTETDQRITIGLNLPSGEMGRKDLIKIENTFLTDEQVNQLSLYAPQATVNRIDDYEVVGKSRPSLPDRIDSVLVCPNSNCISHAEPVSSSFAVKKRADDIALKCKYCEKEFSHYVVLAN</sequence>
<feature type="chain" id="PRO_0000329095" description="Aspartate carbamoyltransferase regulatory chain">
    <location>
        <begin position="1"/>
        <end position="153"/>
    </location>
</feature>
<feature type="binding site" evidence="1">
    <location>
        <position position="109"/>
    </location>
    <ligand>
        <name>Zn(2+)</name>
        <dbReference type="ChEBI" id="CHEBI:29105"/>
    </ligand>
</feature>
<feature type="binding site" evidence="1">
    <location>
        <position position="114"/>
    </location>
    <ligand>
        <name>Zn(2+)</name>
        <dbReference type="ChEBI" id="CHEBI:29105"/>
    </ligand>
</feature>
<feature type="binding site" evidence="1">
    <location>
        <position position="138"/>
    </location>
    <ligand>
        <name>Zn(2+)</name>
        <dbReference type="ChEBI" id="CHEBI:29105"/>
    </ligand>
</feature>
<feature type="binding site" evidence="1">
    <location>
        <position position="141"/>
    </location>
    <ligand>
        <name>Zn(2+)</name>
        <dbReference type="ChEBI" id="CHEBI:29105"/>
    </ligand>
</feature>
<comment type="function">
    <text evidence="1">Involved in allosteric regulation of aspartate carbamoyltransferase.</text>
</comment>
<comment type="cofactor">
    <cofactor evidence="1">
        <name>Zn(2+)</name>
        <dbReference type="ChEBI" id="CHEBI:29105"/>
    </cofactor>
    <text evidence="1">Binds 1 zinc ion per subunit.</text>
</comment>
<comment type="subunit">
    <text evidence="1">Contains catalytic and regulatory chains.</text>
</comment>
<comment type="similarity">
    <text evidence="1">Belongs to the PyrI family.</text>
</comment>
<gene>
    <name evidence="1" type="primary">pyrI</name>
    <name type="ordered locus">KPN78578_45830</name>
    <name type="ORF">KPN_04656</name>
</gene>
<accession>A6THH3</accession>
<proteinExistence type="inferred from homology"/>
<organism>
    <name type="scientific">Klebsiella pneumoniae subsp. pneumoniae (strain ATCC 700721 / MGH 78578)</name>
    <dbReference type="NCBI Taxonomy" id="272620"/>
    <lineage>
        <taxon>Bacteria</taxon>
        <taxon>Pseudomonadati</taxon>
        <taxon>Pseudomonadota</taxon>
        <taxon>Gammaproteobacteria</taxon>
        <taxon>Enterobacterales</taxon>
        <taxon>Enterobacteriaceae</taxon>
        <taxon>Klebsiella/Raoultella group</taxon>
        <taxon>Klebsiella</taxon>
        <taxon>Klebsiella pneumoniae complex</taxon>
    </lineage>
</organism>
<dbReference type="EMBL" id="CP000647">
    <property type="protein sequence ID" value="ABR80007.1"/>
    <property type="molecule type" value="Genomic_DNA"/>
</dbReference>
<dbReference type="RefSeq" id="WP_002886927.1">
    <property type="nucleotide sequence ID" value="NC_009648.1"/>
</dbReference>
<dbReference type="SMR" id="A6THH3"/>
<dbReference type="STRING" id="272620.KPN_04656"/>
<dbReference type="PaxDb" id="272620-KPN_04656"/>
<dbReference type="EnsemblBacteria" id="ABR80007">
    <property type="protein sequence ID" value="ABR80007"/>
    <property type="gene ID" value="KPN_04656"/>
</dbReference>
<dbReference type="GeneID" id="93275339"/>
<dbReference type="KEGG" id="kpn:KPN_04656"/>
<dbReference type="HOGENOM" id="CLU_128576_0_0_6"/>
<dbReference type="Proteomes" id="UP000000265">
    <property type="component" value="Chromosome"/>
</dbReference>
<dbReference type="GO" id="GO:0009347">
    <property type="term" value="C:aspartate carbamoyltransferase complex"/>
    <property type="evidence" value="ECO:0007669"/>
    <property type="project" value="InterPro"/>
</dbReference>
<dbReference type="GO" id="GO:0046872">
    <property type="term" value="F:metal ion binding"/>
    <property type="evidence" value="ECO:0007669"/>
    <property type="project" value="UniProtKB-KW"/>
</dbReference>
<dbReference type="GO" id="GO:0006207">
    <property type="term" value="P:'de novo' pyrimidine nucleobase biosynthetic process"/>
    <property type="evidence" value="ECO:0007669"/>
    <property type="project" value="InterPro"/>
</dbReference>
<dbReference type="GO" id="GO:0006221">
    <property type="term" value="P:pyrimidine nucleotide biosynthetic process"/>
    <property type="evidence" value="ECO:0007669"/>
    <property type="project" value="UniProtKB-UniRule"/>
</dbReference>
<dbReference type="FunFam" id="2.30.30.20:FF:000001">
    <property type="entry name" value="Aspartate carbamoyltransferase regulatory chain"/>
    <property type="match status" value="1"/>
</dbReference>
<dbReference type="FunFam" id="3.30.70.140:FF:000001">
    <property type="entry name" value="Aspartate carbamoyltransferase regulatory chain"/>
    <property type="match status" value="1"/>
</dbReference>
<dbReference type="Gene3D" id="2.30.30.20">
    <property type="entry name" value="Aspartate carbamoyltransferase regulatory subunit, C-terminal domain"/>
    <property type="match status" value="1"/>
</dbReference>
<dbReference type="Gene3D" id="3.30.70.140">
    <property type="entry name" value="Aspartate carbamoyltransferase regulatory subunit, N-terminal domain"/>
    <property type="match status" value="1"/>
</dbReference>
<dbReference type="HAMAP" id="MF_00002">
    <property type="entry name" value="Asp_carb_tr_reg"/>
    <property type="match status" value="1"/>
</dbReference>
<dbReference type="InterPro" id="IPR020545">
    <property type="entry name" value="Asp_carbamoyltransf_reg_N"/>
</dbReference>
<dbReference type="InterPro" id="IPR002801">
    <property type="entry name" value="Asp_carbamoylTrfase_reg"/>
</dbReference>
<dbReference type="InterPro" id="IPR020542">
    <property type="entry name" value="Asp_carbamoyltrfase_reg_C"/>
</dbReference>
<dbReference type="InterPro" id="IPR036792">
    <property type="entry name" value="Asp_carbatrfase_reg_C_sf"/>
</dbReference>
<dbReference type="InterPro" id="IPR036793">
    <property type="entry name" value="Asp_carbatrfase_reg_N_sf"/>
</dbReference>
<dbReference type="NCBIfam" id="TIGR00240">
    <property type="entry name" value="ATCase_reg"/>
    <property type="match status" value="1"/>
</dbReference>
<dbReference type="PANTHER" id="PTHR35805">
    <property type="entry name" value="ASPARTATE CARBAMOYLTRANSFERASE REGULATORY CHAIN"/>
    <property type="match status" value="1"/>
</dbReference>
<dbReference type="PANTHER" id="PTHR35805:SF1">
    <property type="entry name" value="ASPARTATE CARBAMOYLTRANSFERASE REGULATORY CHAIN"/>
    <property type="match status" value="1"/>
</dbReference>
<dbReference type="Pfam" id="PF01948">
    <property type="entry name" value="PyrI"/>
    <property type="match status" value="1"/>
</dbReference>
<dbReference type="Pfam" id="PF02748">
    <property type="entry name" value="PyrI_C"/>
    <property type="match status" value="1"/>
</dbReference>
<dbReference type="SUPFAM" id="SSF57825">
    <property type="entry name" value="Aspartate carbamoyltransferase, Regulatory-chain, C-terminal domain"/>
    <property type="match status" value="1"/>
</dbReference>
<dbReference type="SUPFAM" id="SSF54893">
    <property type="entry name" value="Aspartate carbamoyltransferase, Regulatory-chain, N-terminal domain"/>
    <property type="match status" value="1"/>
</dbReference>
<protein>
    <recommendedName>
        <fullName evidence="1">Aspartate carbamoyltransferase regulatory chain</fullName>
    </recommendedName>
</protein>
<reference key="1">
    <citation type="submission" date="2006-09" db="EMBL/GenBank/DDBJ databases">
        <authorList>
            <consortium name="The Klebsiella pneumonia Genome Sequencing Project"/>
            <person name="McClelland M."/>
            <person name="Sanderson E.K."/>
            <person name="Spieth J."/>
            <person name="Clifton W.S."/>
            <person name="Latreille P."/>
            <person name="Sabo A."/>
            <person name="Pepin K."/>
            <person name="Bhonagiri V."/>
            <person name="Porwollik S."/>
            <person name="Ali J."/>
            <person name="Wilson R.K."/>
        </authorList>
    </citation>
    <scope>NUCLEOTIDE SEQUENCE [LARGE SCALE GENOMIC DNA]</scope>
    <source>
        <strain>ATCC 700721 / MGH 78578</strain>
    </source>
</reference>